<comment type="function">
    <text evidence="1 2 3 5 6 7 8 9">Fumigaclavine B O-acetyltransferase; part of the gene cluster that mediates the biosynthesis of fumiclavanine C, a fungal ergot alkaloid (PubMed:15933009, PubMed:26972831). DmaW catalyzes the first step of ergot alkaloid biosynthesis by condensing dimethylallyl diphosphate (DMAP) and tryptophan to form 4-dimethylallyl-L-tryptophan (PubMed:15870460). The second step is catalyzed by the methyltransferase easF that methylates 4-dimethylallyl-L-tryptophan in the presence of S-adenosyl-L-methionine, resulting in the formation of 4-dimethylallyl-L-abrine (By similarity). The catalase easC and the FAD-dependent oxidoreductase easE then transform 4-dimethylallyl-L-abrine to chanoclavine-I which is further oxidized by EasD in the presence of NAD(+), resulting in the formation of chanoclavine-I aldehyde (PubMed:20039019, PubMed:20526482, PubMed:21409592). EasA reduces chanoclavine-I aldehyde to dihydrochanoclavine-I aldehyde that spontaneously dehydrates to form 6,8-dimethyl-6,7-didehydroergoline (PubMed:20526482). EasG then catalyzes the reduction of 6,8-dimethyl-6,7-didehydroergoline to form festuclavine (PubMed:20526482). Hydrolysis of festuclavine by easM then leads to the formation of fumigaclavine B which is in turn acetylated by easN to fumigaclavine A (PubMed:26972831). Finally, easL catalyzes the conversion of fumigaclavine A into fumigaclavine C by attaching a dimethylallyl moiety to C-2 of the indole nucleus (PubMed:19672909).</text>
</comment>
<comment type="catalytic activity">
    <reaction evidence="5">
        <text>fumigaclavine B + acetyl-CoA = fumigaclavine A + CoA</text>
        <dbReference type="Rhea" id="RHEA:34267"/>
        <dbReference type="ChEBI" id="CHEBI:57287"/>
        <dbReference type="ChEBI" id="CHEBI:57288"/>
        <dbReference type="ChEBI" id="CHEBI:67145"/>
        <dbReference type="ChEBI" id="CHEBI:67146"/>
        <dbReference type="EC" id="2.3.1.205"/>
    </reaction>
</comment>
<comment type="biophysicochemical properties">
    <kinetics>
        <KM evidence="5">147 uM for fumigaclavine B</KM>
        <KM evidence="5">122 uM for acetyl-CoA</KM>
    </kinetics>
</comment>
<comment type="pathway">
    <text evidence="5">Alkaloid biosynthesis; ergot alkaloid biosynthesis.</text>
</comment>
<comment type="subunit">
    <text evidence="5">Monomer.</text>
</comment>
<comment type="induction">
    <text evidence="4">The expression of the ergot alkaloid synthesis cluster which leads to the synthesis of fumigaclavines is positively regulated by the brlA and stuA transcription factors (PubMed:19028996).</text>
</comment>
<comment type="biotechnology">
    <text evidence="13">Ergot alkaloids are known for their toxic effects on humans who consume contaminated grains or livestock that graze on grasses harboring ergot alkaloid-producing fungi (PubMed:19523108). Due to their strong affinity for monoamine neurotransmitter receptors they may also have clinical uses such as treatment of migraines, Parkinson's disease and cerebrovascular insufficiency (PubMed:19523108).</text>
</comment>
<comment type="similarity">
    <text evidence="12">Belongs to the fumigaclavine B O-acetyltransferase family.</text>
</comment>
<reference key="1">
    <citation type="journal article" date="2005" name="Nature">
        <title>Genomic sequence of the pathogenic and allergenic filamentous fungus Aspergillus fumigatus.</title>
        <authorList>
            <person name="Nierman W.C."/>
            <person name="Pain A."/>
            <person name="Anderson M.J."/>
            <person name="Wortman J.R."/>
            <person name="Kim H.S."/>
            <person name="Arroyo J."/>
            <person name="Berriman M."/>
            <person name="Abe K."/>
            <person name="Archer D.B."/>
            <person name="Bermejo C."/>
            <person name="Bennett J.W."/>
            <person name="Bowyer P."/>
            <person name="Chen D."/>
            <person name="Collins M."/>
            <person name="Coulsen R."/>
            <person name="Davies R."/>
            <person name="Dyer P.S."/>
            <person name="Farman M.L."/>
            <person name="Fedorova N."/>
            <person name="Fedorova N.D."/>
            <person name="Feldblyum T.V."/>
            <person name="Fischer R."/>
            <person name="Fosker N."/>
            <person name="Fraser A."/>
            <person name="Garcia J.L."/>
            <person name="Garcia M.J."/>
            <person name="Goble A."/>
            <person name="Goldman G.H."/>
            <person name="Gomi K."/>
            <person name="Griffith-Jones S."/>
            <person name="Gwilliam R."/>
            <person name="Haas B.J."/>
            <person name="Haas H."/>
            <person name="Harris D.E."/>
            <person name="Horiuchi H."/>
            <person name="Huang J."/>
            <person name="Humphray S."/>
            <person name="Jimenez J."/>
            <person name="Keller N."/>
            <person name="Khouri H."/>
            <person name="Kitamoto K."/>
            <person name="Kobayashi T."/>
            <person name="Konzack S."/>
            <person name="Kulkarni R."/>
            <person name="Kumagai T."/>
            <person name="Lafton A."/>
            <person name="Latge J.-P."/>
            <person name="Li W."/>
            <person name="Lord A."/>
            <person name="Lu C."/>
            <person name="Majoros W.H."/>
            <person name="May G.S."/>
            <person name="Miller B.L."/>
            <person name="Mohamoud Y."/>
            <person name="Molina M."/>
            <person name="Monod M."/>
            <person name="Mouyna I."/>
            <person name="Mulligan S."/>
            <person name="Murphy L.D."/>
            <person name="O'Neil S."/>
            <person name="Paulsen I."/>
            <person name="Penalva M.A."/>
            <person name="Pertea M."/>
            <person name="Price C."/>
            <person name="Pritchard B.L."/>
            <person name="Quail M.A."/>
            <person name="Rabbinowitsch E."/>
            <person name="Rawlins N."/>
            <person name="Rajandream M.A."/>
            <person name="Reichard U."/>
            <person name="Renauld H."/>
            <person name="Robson G.D."/>
            <person name="Rodriguez de Cordoba S."/>
            <person name="Rodriguez-Pena J.M."/>
            <person name="Ronning C.M."/>
            <person name="Rutter S."/>
            <person name="Salzberg S.L."/>
            <person name="Sanchez M."/>
            <person name="Sanchez-Ferrero J.C."/>
            <person name="Saunders D."/>
            <person name="Seeger K."/>
            <person name="Squares R."/>
            <person name="Squares S."/>
            <person name="Takeuchi M."/>
            <person name="Tekaia F."/>
            <person name="Turner G."/>
            <person name="Vazquez de Aldana C.R."/>
            <person name="Weidman J."/>
            <person name="White O."/>
            <person name="Woodward J.R."/>
            <person name="Yu J.-H."/>
            <person name="Fraser C.M."/>
            <person name="Galagan J.E."/>
            <person name="Asai K."/>
            <person name="Machida M."/>
            <person name="Hall N."/>
            <person name="Barrell B.G."/>
            <person name="Denning D.W."/>
        </authorList>
    </citation>
    <scope>NUCLEOTIDE SEQUENCE [LARGE SCALE GENOMIC DNA]</scope>
    <source>
        <strain>ATCC MYA-4609 / CBS 101355 / FGSC A1100 / Af293</strain>
    </source>
</reference>
<reference key="2">
    <citation type="journal article" date="2005" name="Appl. Environ. Microbiol.">
        <title>An ergot alkaloid biosynthesis gene and clustered hypothetical genes from Aspergillus fumigatus.</title>
        <authorList>
            <person name="Coyle C.M."/>
            <person name="Panaccione D.G."/>
        </authorList>
    </citation>
    <scope>IDENTIFICATION</scope>
    <scope>FUNCTION</scope>
</reference>
<reference key="3">
    <citation type="journal article" date="2005" name="Microbiology">
        <title>Overproduction, purification and characterization of FgaPT2, a dimethylallyltryptophan synthase from Aspergillus fumigatus.</title>
        <authorList>
            <person name="Unsoeld I.A."/>
            <person name="Li S.-M."/>
        </authorList>
    </citation>
    <scope>FUNCTION</scope>
</reference>
<reference key="4">
    <citation type="journal article" date="2009" name="ChemBioChem">
        <title>Ergot alkaloid biosynthesis in Aspergillus fumigatus: FgaAT catalyses the acetylation of fumigaclavine B.</title>
        <authorList>
            <person name="Liu X."/>
            <person name="Wang L."/>
            <person name="Steffan N."/>
            <person name="Yin W.B."/>
            <person name="Li S.M."/>
        </authorList>
    </citation>
    <scope>FUNCTION</scope>
    <scope>CATALYTIC ACTIVITY</scope>
    <scope>PATHWAY</scope>
    <scope>BIOPHYSICOCHEMICAL PROPERTIES</scope>
    <scope>SUBUNIT</scope>
    <source>
        <strain>NIH 5233 / ATCC 13073</strain>
    </source>
</reference>
<reference key="5">
    <citation type="journal article" date="2009" name="Eukaryot. Cell">
        <title>Transcriptional profiling identifies a role for BrlA in the response to nitrogen depletion and for StuA in the regulation of secondary metabolite clusters in Aspergillus fumigatus.</title>
        <authorList>
            <person name="Twumasi-Boateng K."/>
            <person name="Yu Y."/>
            <person name="Chen D."/>
            <person name="Gravelat F.N."/>
            <person name="Nierman W.C."/>
            <person name="Sheppard D.C."/>
        </authorList>
    </citation>
    <scope>INDUCTION</scope>
</reference>
<reference key="6">
    <citation type="journal article" date="2009" name="Mol. Plant Pathol.">
        <title>Ergot: from witchcraft to biotechnology.</title>
        <authorList>
            <person name="Haarmann T."/>
            <person name="Rolke Y."/>
            <person name="Giesbert S."/>
            <person name="Tudzynski P."/>
        </authorList>
    </citation>
    <scope>BIOTECHNOLOGY</scope>
</reference>
<reference key="7">
    <citation type="journal article" date="2010" name="Arch. Microbiol.">
        <title>Ergot alkaloid biosynthesis in Aspergillus fumigatus: conversion of chanoclavine-I to chanoclavine-I aldehyde catalyzed by a short-chain alcohol dehydrogenase FgaDH.</title>
        <authorList>
            <person name="Wallwey C."/>
            <person name="Matuschek M."/>
            <person name="Li S.M."/>
        </authorList>
    </citation>
    <scope>FUNCTION</scope>
</reference>
<reference key="8">
    <citation type="journal article" date="2010" name="Org. Biomol. Chem.">
        <title>Ergot alkaloid biosynthesis in Aspergillus fumigatus: Conversion of chanoclavine-I aldehyde to festuclavine by the festuclavine synthase FgaFS in the presence of the old yellow enzyme FgaOx3.</title>
        <authorList>
            <person name="Wallwey C."/>
            <person name="Matuschek M."/>
            <person name="Xie X.L."/>
            <person name="Li S.M."/>
        </authorList>
    </citation>
    <scope>FUNCTION</scope>
    <scope>NOMENCLATURE</scope>
</reference>
<reference key="9">
    <citation type="journal article" date="2011" name="Curr. Genet.">
        <title>Ergot cluster-encoded catalase is required for synthesis of chanoclavine-I in Aspergillus fumigatus.</title>
        <authorList>
            <person name="Goetz K.E."/>
            <person name="Coyle C.M."/>
            <person name="Cheng J.Z."/>
            <person name="O'Connor S.E."/>
            <person name="Panaccione D.G."/>
        </authorList>
    </citation>
    <scope>FUNCTION</scope>
</reference>
<reference key="10">
    <citation type="journal article" date="2012" name="Mycologia">
        <title>Chemotypic and genotypic diversity in the ergot alkaloid pathway of Aspergillus fumigatus.</title>
        <authorList>
            <person name="Robinson S.L."/>
            <person name="Panaccione D.G."/>
        </authorList>
    </citation>
    <scope>IDENTIFICATION</scope>
    <scope>NOMENCLATURE</scope>
</reference>
<reference key="11">
    <citation type="journal article" date="2016" name="Curr. Genet.">
        <title>Functional analysis of the gene controlling hydroxylation of festuclavine in the ergot alkaloid pathway of Neosartorya fumigata.</title>
        <authorList>
            <person name="Bilovol Y."/>
            <person name="Panaccione D.G."/>
        </authorList>
    </citation>
    <scope>FUNCTION</scope>
</reference>
<feature type="chain" id="PRO_0000421750" description="Fumigaclavine B O-acetyltransferase easN">
    <location>
        <begin position="1"/>
        <end position="494"/>
    </location>
</feature>
<protein>
    <recommendedName>
        <fullName evidence="12">Fumigaclavine B O-acetyltransferase easN</fullName>
        <ecNumber evidence="5">2.3.1.205</ecNumber>
    </recommendedName>
    <alternativeName>
        <fullName evidence="11">Ergot alkaloid synthesis protein N</fullName>
    </alternativeName>
</protein>
<organism>
    <name type="scientific">Aspergillus fumigatus (strain ATCC MYA-4609 / CBS 101355 / FGSC A1100 / Af293)</name>
    <name type="common">Neosartorya fumigata</name>
    <dbReference type="NCBI Taxonomy" id="330879"/>
    <lineage>
        <taxon>Eukaryota</taxon>
        <taxon>Fungi</taxon>
        <taxon>Dikarya</taxon>
        <taxon>Ascomycota</taxon>
        <taxon>Pezizomycotina</taxon>
        <taxon>Eurotiomycetes</taxon>
        <taxon>Eurotiomycetidae</taxon>
        <taxon>Eurotiales</taxon>
        <taxon>Aspergillaceae</taxon>
        <taxon>Aspergillus</taxon>
        <taxon>Aspergillus subgen. Fumigati</taxon>
    </lineage>
</organism>
<evidence type="ECO:0000250" key="1">
    <source>
        <dbReference type="UniProtKB" id="B6D5I7"/>
    </source>
</evidence>
<evidence type="ECO:0000269" key="2">
    <source>
    </source>
</evidence>
<evidence type="ECO:0000269" key="3">
    <source>
    </source>
</evidence>
<evidence type="ECO:0000269" key="4">
    <source>
    </source>
</evidence>
<evidence type="ECO:0000269" key="5">
    <source>
    </source>
</evidence>
<evidence type="ECO:0000269" key="6">
    <source>
    </source>
</evidence>
<evidence type="ECO:0000269" key="7">
    <source>
    </source>
</evidence>
<evidence type="ECO:0000269" key="8">
    <source>
    </source>
</evidence>
<evidence type="ECO:0000269" key="9">
    <source>
    </source>
</evidence>
<evidence type="ECO:0000303" key="10">
    <source>
    </source>
</evidence>
<evidence type="ECO:0000303" key="11">
    <source>
    </source>
</evidence>
<evidence type="ECO:0000305" key="12"/>
<evidence type="ECO:0000305" key="13">
    <source>
    </source>
</evidence>
<accession>Q4WZ64</accession>
<keyword id="KW-0012">Acyltransferase</keyword>
<keyword id="KW-0017">Alkaloid metabolism</keyword>
<keyword id="KW-1185">Reference proteome</keyword>
<keyword id="KW-0808">Transferase</keyword>
<dbReference type="EC" id="2.3.1.205" evidence="5"/>
<dbReference type="EMBL" id="AAHF01000001">
    <property type="protein sequence ID" value="EAL94101.1"/>
    <property type="molecule type" value="Genomic_DNA"/>
</dbReference>
<dbReference type="RefSeq" id="XP_756139.1">
    <property type="nucleotide sequence ID" value="XM_751046.1"/>
</dbReference>
<dbReference type="SMR" id="Q4WZ64"/>
<dbReference type="FunCoup" id="Q4WZ64">
    <property type="interactions" value="68"/>
</dbReference>
<dbReference type="STRING" id="330879.Q4WZ64"/>
<dbReference type="EnsemblFungi" id="EAL94101">
    <property type="protein sequence ID" value="EAL94101"/>
    <property type="gene ID" value="AFUA_2G18020"/>
</dbReference>
<dbReference type="GeneID" id="3512714"/>
<dbReference type="KEGG" id="afm:AFUA_2G18020"/>
<dbReference type="VEuPathDB" id="FungiDB:Afu2g18020"/>
<dbReference type="eggNOG" id="ENOG502RS2N">
    <property type="taxonomic scope" value="Eukaryota"/>
</dbReference>
<dbReference type="HOGENOM" id="CLU_026450_1_1_1"/>
<dbReference type="InParanoid" id="Q4WZ64"/>
<dbReference type="OMA" id="ILPRMYF"/>
<dbReference type="OrthoDB" id="1862401at2759"/>
<dbReference type="BioCyc" id="MetaCyc:MONOMER-15596"/>
<dbReference type="BRENDA" id="2.3.1.205">
    <property type="organism ID" value="508"/>
</dbReference>
<dbReference type="SABIO-RK" id="Q4WZ64"/>
<dbReference type="UniPathway" id="UPA00327"/>
<dbReference type="Proteomes" id="UP000002530">
    <property type="component" value="Chromosome 2"/>
</dbReference>
<dbReference type="GO" id="GO:0005737">
    <property type="term" value="C:cytoplasm"/>
    <property type="evidence" value="ECO:0000318"/>
    <property type="project" value="GO_Central"/>
</dbReference>
<dbReference type="GO" id="GO:0016747">
    <property type="term" value="F:acyltransferase activity, transferring groups other than amino-acyl groups"/>
    <property type="evidence" value="ECO:0000314"/>
    <property type="project" value="UniProtKB"/>
</dbReference>
<dbReference type="GO" id="GO:0009821">
    <property type="term" value="P:alkaloid biosynthetic process"/>
    <property type="evidence" value="ECO:0000314"/>
    <property type="project" value="AspGD"/>
</dbReference>
<dbReference type="GO" id="GO:0035837">
    <property type="term" value="P:ergot alkaloid biosynthetic process"/>
    <property type="evidence" value="ECO:0000314"/>
    <property type="project" value="UniProtKB"/>
</dbReference>
<dbReference type="GO" id="GO:1900809">
    <property type="term" value="P:fumigaclavine C biosynthetic process"/>
    <property type="evidence" value="ECO:0000314"/>
    <property type="project" value="GO_Central"/>
</dbReference>
<dbReference type="GO" id="GO:0044550">
    <property type="term" value="P:secondary metabolite biosynthetic process"/>
    <property type="evidence" value="ECO:0000314"/>
    <property type="project" value="AspGD"/>
</dbReference>
<dbReference type="Gene3D" id="3.30.559.10">
    <property type="entry name" value="Chloramphenicol acetyltransferase-like domain"/>
    <property type="match status" value="2"/>
</dbReference>
<dbReference type="InterPro" id="IPR023213">
    <property type="entry name" value="CAT-like_dom_sf"/>
</dbReference>
<dbReference type="InterPro" id="IPR051283">
    <property type="entry name" value="Sec_Metabolite_Acyltrans"/>
</dbReference>
<dbReference type="InterPro" id="IPR054710">
    <property type="entry name" value="Tri101-like_N"/>
</dbReference>
<dbReference type="PANTHER" id="PTHR31896">
    <property type="entry name" value="FAMILY REGULATORY PROTEIN, PUTATIVE (AFU_ORTHOLOGUE AFUA_3G14730)-RELATED"/>
    <property type="match status" value="1"/>
</dbReference>
<dbReference type="PANTHER" id="PTHR31896:SF64">
    <property type="entry name" value="TRICHOTHECENE 3-O-ACETYLTRANSFERASE"/>
    <property type="match status" value="1"/>
</dbReference>
<dbReference type="Pfam" id="PF22664">
    <property type="entry name" value="TRI-like_N"/>
    <property type="match status" value="1"/>
</dbReference>
<sequence>MKKQVTFKPFRLSPVDHSLPKVYIFKSLYFRGVDDTGSLSRLQDGIDRLISCLPFLSGEVVPCADIPDKVGVLQVQMPCPSLQEIPMLLVKSYPNHTWPAASTSERWRNTALLDQSYRPLPDFIPPSKPRPVLRFQANFLADGLMLCMGYNHSVFDGTGAGNILEMLADCCRANPNSILALPTNGDIESELRGLLSSPGVAVANASQEAYAINCAHTEVEPEPSSAMLYCWPFLLSSEKIECLQEACNSLLPHIVRLYSGTQSSLINQDTNWPHILSSNDVLTALLAVSIEKAREATGALGHMSRSLAMAVNLRERLKPMPRHYLGNLVTTVWVSHHRPAVKDLETMVLPVPACNRHEIDRDDLLWITHVAFRIRLGLNAINEEHIRGLIHYLHSQDDWEQIGIHFTDPIFISSWRHLKVYELDFGPTIGHAEHFEMDVGTTDGVCVVMPANTRAVGKTKKAPWDIRIVLNPEVLQALIASAIFGWAMVKDAST</sequence>
<name>EASN_ASPFU</name>
<gene>
    <name evidence="11" type="primary">easN</name>
    <name evidence="10" type="synonym">fgaAT</name>
    <name type="ORF">AFUA_2G18020</name>
</gene>
<proteinExistence type="evidence at protein level"/>